<keyword id="KW-0903">Direct protein sequencing</keyword>
<keyword id="KW-0646">Protease inhibitor</keyword>
<keyword id="KW-1185">Reference proteome</keyword>
<keyword id="KW-0722">Serine protease inhibitor</keyword>
<keyword id="KW-0732">Signal</keyword>
<evidence type="ECO:0000269" key="1">
    <source>
    </source>
</evidence>
<evidence type="ECO:0000305" key="2"/>
<proteinExistence type="evidence at protein level"/>
<protein>
    <recommendedName>
        <fullName>Wound-induced proteinase inhibitor 1</fullName>
    </recommendedName>
    <alternativeName>
        <fullName>Chymotrypsin inhibitor I, D subunit</fullName>
    </alternativeName>
    <alternativeName>
        <fullName>Wound-induced proteinase inhibitor I</fullName>
    </alternativeName>
</protein>
<sequence length="107" mass="12145">MESKFAHIIVFFLLATSFETLLARKESDGPEVIELQKEFECNGKQRWPELIGVPTKLAKGIIEKENSLITNVQILLNGSPVTMDYRCNRVRLFDNILGDVVQIPRVA</sequence>
<accession>P08454</accession>
<feature type="signal peptide">
    <location>
        <begin position="1"/>
        <end position="23"/>
    </location>
</feature>
<feature type="propeptide" id="PRO_0000025292" evidence="1">
    <location>
        <begin position="24"/>
        <end position="36"/>
    </location>
</feature>
<feature type="chain" id="PRO_0000025293" description="Wound-induced proteinase inhibitor 1">
    <location>
        <begin position="37"/>
        <end position="107"/>
    </location>
</feature>
<feature type="site" description="Reactive bond">
    <location>
        <begin position="83"/>
        <end position="84"/>
    </location>
</feature>
<feature type="sequence conflict" description="In Ref. 2; AA sequence." evidence="2" ref="2">
    <original>QR</original>
    <variation>LQ</variation>
    <location>
        <begin position="45"/>
        <end position="46"/>
    </location>
</feature>
<feature type="sequence conflict" description="In Ref. 2; AA sequence." evidence="2" ref="2">
    <original>E</original>
    <variation>Q</variation>
    <location>
        <position position="65"/>
    </location>
</feature>
<feature type="sequence conflict" description="In Ref. 1; AAA33816." evidence="2" ref="1">
    <original>C</original>
    <variation>S</variation>
    <location>
        <position position="87"/>
    </location>
</feature>
<name>ICID_SOLTU</name>
<organism>
    <name type="scientific">Solanum tuberosum</name>
    <name type="common">Potato</name>
    <dbReference type="NCBI Taxonomy" id="4113"/>
    <lineage>
        <taxon>Eukaryota</taxon>
        <taxon>Viridiplantae</taxon>
        <taxon>Streptophyta</taxon>
        <taxon>Embryophyta</taxon>
        <taxon>Tracheophyta</taxon>
        <taxon>Spermatophyta</taxon>
        <taxon>Magnoliopsida</taxon>
        <taxon>eudicotyledons</taxon>
        <taxon>Gunneridae</taxon>
        <taxon>Pentapetalae</taxon>
        <taxon>asterids</taxon>
        <taxon>lamiids</taxon>
        <taxon>Solanales</taxon>
        <taxon>Solanaceae</taxon>
        <taxon>Solanoideae</taxon>
        <taxon>Solaneae</taxon>
        <taxon>Solanum</taxon>
    </lineage>
</organism>
<dbReference type="EMBL" id="M17108">
    <property type="protein sequence ID" value="AAA33816.1"/>
    <property type="molecule type" value="Genomic_DNA"/>
</dbReference>
<dbReference type="PIR" id="S06251">
    <property type="entry name" value="S06251"/>
</dbReference>
<dbReference type="SMR" id="P08454"/>
<dbReference type="FunCoup" id="P08454">
    <property type="interactions" value="25"/>
</dbReference>
<dbReference type="STRING" id="4113.P08454"/>
<dbReference type="MEROPS" id="I13.006"/>
<dbReference type="InParanoid" id="P08454"/>
<dbReference type="Proteomes" id="UP000011115">
    <property type="component" value="Unassembled WGS sequence"/>
</dbReference>
<dbReference type="ExpressionAtlas" id="P08454">
    <property type="expression patterns" value="baseline"/>
</dbReference>
<dbReference type="GO" id="GO:0004867">
    <property type="term" value="F:serine-type endopeptidase inhibitor activity"/>
    <property type="evidence" value="ECO:0007669"/>
    <property type="project" value="UniProtKB-KW"/>
</dbReference>
<dbReference type="GO" id="GO:0009611">
    <property type="term" value="P:response to wounding"/>
    <property type="evidence" value="ECO:0007669"/>
    <property type="project" value="InterPro"/>
</dbReference>
<dbReference type="Gene3D" id="3.30.10.10">
    <property type="entry name" value="Trypsin Inhibitor V, subunit A"/>
    <property type="match status" value="1"/>
</dbReference>
<dbReference type="InterPro" id="IPR000864">
    <property type="entry name" value="Prot_inh_pot1"/>
</dbReference>
<dbReference type="InterPro" id="IPR036354">
    <property type="entry name" value="Prot_inh_pot1_sf"/>
</dbReference>
<dbReference type="PANTHER" id="PTHR33091">
    <property type="entry name" value="PROTEIN, PUTATIVE, EXPRESSED-RELATED"/>
    <property type="match status" value="1"/>
</dbReference>
<dbReference type="PANTHER" id="PTHR33091:SF65">
    <property type="entry name" value="WOUND-INDUCED PROTEINASE INHIBITOR 1"/>
    <property type="match status" value="1"/>
</dbReference>
<dbReference type="Pfam" id="PF00280">
    <property type="entry name" value="potato_inhibit"/>
    <property type="match status" value="1"/>
</dbReference>
<dbReference type="PRINTS" id="PR00292">
    <property type="entry name" value="POTATOINHBTR"/>
</dbReference>
<dbReference type="SUPFAM" id="SSF54654">
    <property type="entry name" value="CI-2 family of serine protease inhibitors"/>
    <property type="match status" value="1"/>
</dbReference>
<dbReference type="PROSITE" id="PS00285">
    <property type="entry name" value="POTATO_INHIBITOR"/>
    <property type="match status" value="1"/>
</dbReference>
<reference key="1">
    <citation type="journal article" date="1987" name="Plant Mol. Biol.">
        <title>Molecular characterization of a wound-inducible inhibitor I gene from potato and the processing of its mRNA and protein.</title>
        <authorList>
            <person name="Cleveland T.E."/>
            <person name="Thornburg R.W."/>
            <person name="Ryan C.A."/>
        </authorList>
    </citation>
    <scope>NUCLEOTIDE SEQUENCE [GENOMIC DNA]</scope>
</reference>
<reference key="2">
    <citation type="journal article" date="1974" name="FEBS Lett.">
        <title>Chymotryptic inhibitor I from potatoes: the amino acid sequences of subunits B, C, and D.</title>
        <authorList>
            <person name="Richardson M."/>
            <person name="Cossins L."/>
        </authorList>
    </citation>
    <scope>PROTEIN SEQUENCE OF 37-107 (SUBUNITS B; C AND D)</scope>
    <source>
        <strain>cv. Ulster Prince</strain>
    </source>
</reference>
<reference key="3">
    <citation type="journal article" date="1975" name="FEBS Lett.">
        <authorList>
            <person name="Richardson M."/>
            <person name="Cossins L."/>
        </authorList>
    </citation>
    <scope>ERRATUM OF PUBMED:4606338</scope>
    <scope>SEQUENCE REVISION</scope>
</reference>
<comment type="function">
    <text>Inhibits both chymotrypsin and trypsin.</text>
</comment>
<comment type="subunit">
    <text>Heterogeneous tetramers of similar chains.</text>
</comment>
<comment type="miscellaneous">
    <text>Mechanical damage (i.e. insect chewing) to this plant results in the systemic release of a factor from the wound site. Within the leaves it induces the cytoplasmic synthesis of proteinase inhibitors I and II.</text>
</comment>
<comment type="similarity">
    <text evidence="2">Belongs to the protease inhibitor I13 (potato type I serine protease inhibitor) family.</text>
</comment>